<evidence type="ECO:0000255" key="1">
    <source>
        <dbReference type="HAMAP-Rule" id="MF_00236"/>
    </source>
</evidence>
<evidence type="ECO:0000256" key="2">
    <source>
        <dbReference type="SAM" id="MobiDB-lite"/>
    </source>
</evidence>
<organism>
    <name type="scientific">Aquifex aeolicus (strain VF5)</name>
    <dbReference type="NCBI Taxonomy" id="224324"/>
    <lineage>
        <taxon>Bacteria</taxon>
        <taxon>Pseudomonadati</taxon>
        <taxon>Aquificota</taxon>
        <taxon>Aquificia</taxon>
        <taxon>Aquificales</taxon>
        <taxon>Aquificaceae</taxon>
        <taxon>Aquifex</taxon>
    </lineage>
</organism>
<dbReference type="EMBL" id="AE000657">
    <property type="protein sequence ID" value="AAC06451.1"/>
    <property type="molecule type" value="Genomic_DNA"/>
</dbReference>
<dbReference type="PIR" id="C70306">
    <property type="entry name" value="C70306"/>
</dbReference>
<dbReference type="RefSeq" id="NP_213038.1">
    <property type="nucleotide sequence ID" value="NC_000918.1"/>
</dbReference>
<dbReference type="RefSeq" id="WP_010879976.1">
    <property type="nucleotide sequence ID" value="NC_000918.1"/>
</dbReference>
<dbReference type="SMR" id="O66478"/>
<dbReference type="FunCoup" id="O66478">
    <property type="interactions" value="404"/>
</dbReference>
<dbReference type="STRING" id="224324.aq_064c"/>
<dbReference type="EnsemblBacteria" id="AAC06451">
    <property type="protein sequence ID" value="AAC06451"/>
    <property type="gene ID" value="aq_064c"/>
</dbReference>
<dbReference type="KEGG" id="aae:aq_064c"/>
<dbReference type="eggNOG" id="COG1826">
    <property type="taxonomic scope" value="Bacteria"/>
</dbReference>
<dbReference type="HOGENOM" id="CLU_086034_5_4_0"/>
<dbReference type="InParanoid" id="O66478"/>
<dbReference type="OrthoDB" id="15651at2"/>
<dbReference type="Proteomes" id="UP000000798">
    <property type="component" value="Chromosome"/>
</dbReference>
<dbReference type="GO" id="GO:0033281">
    <property type="term" value="C:TAT protein transport complex"/>
    <property type="evidence" value="ECO:0007669"/>
    <property type="project" value="UniProtKB-UniRule"/>
</dbReference>
<dbReference type="GO" id="GO:0008320">
    <property type="term" value="F:protein transmembrane transporter activity"/>
    <property type="evidence" value="ECO:0007669"/>
    <property type="project" value="UniProtKB-UniRule"/>
</dbReference>
<dbReference type="GO" id="GO:0043953">
    <property type="term" value="P:protein transport by the Tat complex"/>
    <property type="evidence" value="ECO:0007669"/>
    <property type="project" value="UniProtKB-UniRule"/>
</dbReference>
<dbReference type="Gene3D" id="1.20.5.3310">
    <property type="match status" value="1"/>
</dbReference>
<dbReference type="HAMAP" id="MF_00236">
    <property type="entry name" value="TatA_E"/>
    <property type="match status" value="1"/>
</dbReference>
<dbReference type="InterPro" id="IPR003369">
    <property type="entry name" value="TatA/B/E"/>
</dbReference>
<dbReference type="InterPro" id="IPR006312">
    <property type="entry name" value="TatA/E"/>
</dbReference>
<dbReference type="NCBIfam" id="TIGR01411">
    <property type="entry name" value="tatAE"/>
    <property type="match status" value="1"/>
</dbReference>
<dbReference type="PANTHER" id="PTHR42982">
    <property type="entry name" value="SEC-INDEPENDENT PROTEIN TRANSLOCASE PROTEIN TATA"/>
    <property type="match status" value="1"/>
</dbReference>
<dbReference type="PANTHER" id="PTHR42982:SF1">
    <property type="entry name" value="SEC-INDEPENDENT PROTEIN TRANSLOCASE PROTEIN TATA"/>
    <property type="match status" value="1"/>
</dbReference>
<dbReference type="Pfam" id="PF02416">
    <property type="entry name" value="TatA_B_E"/>
    <property type="match status" value="1"/>
</dbReference>
<name>TATA2_AQUAE</name>
<sequence length="77" mass="8528">MFPGGISMTELIIILAVILLLFGAGRLPEAGRALGEGIRNFRKALSGETEVKEVKAEDVKTEERKEEKKEEKEKVEA</sequence>
<comment type="function">
    <text evidence="1">Part of the twin-arginine translocation (Tat) system that transports large folded proteins containing a characteristic twin-arginine motif in their signal peptide across membranes. TatA could form the protein-conducting channel of the Tat system.</text>
</comment>
<comment type="subunit">
    <text evidence="1">Forms a complex with TatC.</text>
</comment>
<comment type="subcellular location">
    <subcellularLocation>
        <location evidence="1">Cell inner membrane</location>
        <topology evidence="1">Single-pass membrane protein</topology>
    </subcellularLocation>
</comment>
<comment type="similarity">
    <text evidence="1">Belongs to the TatA/E family.</text>
</comment>
<proteinExistence type="inferred from homology"/>
<reference key="1">
    <citation type="journal article" date="1998" name="Nature">
        <title>The complete genome of the hyperthermophilic bacterium Aquifex aeolicus.</title>
        <authorList>
            <person name="Deckert G."/>
            <person name="Warren P.V."/>
            <person name="Gaasterland T."/>
            <person name="Young W.G."/>
            <person name="Lenox A.L."/>
            <person name="Graham D.E."/>
            <person name="Overbeek R."/>
            <person name="Snead M.A."/>
            <person name="Keller M."/>
            <person name="Aujay M."/>
            <person name="Huber R."/>
            <person name="Feldman R.A."/>
            <person name="Short J.M."/>
            <person name="Olsen G.J."/>
            <person name="Swanson R.V."/>
        </authorList>
    </citation>
    <scope>NUCLEOTIDE SEQUENCE [LARGE SCALE GENOMIC DNA]</scope>
    <source>
        <strain>VF5</strain>
    </source>
</reference>
<keyword id="KW-0997">Cell inner membrane</keyword>
<keyword id="KW-1003">Cell membrane</keyword>
<keyword id="KW-0472">Membrane</keyword>
<keyword id="KW-0653">Protein transport</keyword>
<keyword id="KW-1185">Reference proteome</keyword>
<keyword id="KW-0811">Translocation</keyword>
<keyword id="KW-0812">Transmembrane</keyword>
<keyword id="KW-1133">Transmembrane helix</keyword>
<keyword id="KW-0813">Transport</keyword>
<protein>
    <recommendedName>
        <fullName evidence="1">Sec-independent protein translocase protein TatA 2</fullName>
    </recommendedName>
</protein>
<feature type="chain" id="PRO_0000097971" description="Sec-independent protein translocase protein TatA 2">
    <location>
        <begin position="1"/>
        <end position="77"/>
    </location>
</feature>
<feature type="transmembrane region" description="Helical" evidence="1">
    <location>
        <begin position="2"/>
        <end position="22"/>
    </location>
</feature>
<feature type="region of interest" description="Disordered" evidence="2">
    <location>
        <begin position="52"/>
        <end position="77"/>
    </location>
</feature>
<gene>
    <name evidence="1" type="primary">tatA2</name>
    <name type="ordered locus">aq_064.3</name>
    <name type="ORF">aq_064C</name>
</gene>
<accession>O66478</accession>